<keyword id="KW-0067">ATP-binding</keyword>
<keyword id="KW-0436">Ligase</keyword>
<keyword id="KW-0460">Magnesium</keyword>
<keyword id="KW-0464">Manganese</keyword>
<keyword id="KW-0479">Metal-binding</keyword>
<keyword id="KW-0547">Nucleotide-binding</keyword>
<keyword id="KW-0658">Purine biosynthesis</keyword>
<name>PURP_METS3</name>
<proteinExistence type="inferred from homology"/>
<dbReference type="EC" id="6.3.4.23" evidence="2"/>
<dbReference type="EMBL" id="CP000678">
    <property type="protein sequence ID" value="ABQ86711.1"/>
    <property type="molecule type" value="Genomic_DNA"/>
</dbReference>
<dbReference type="RefSeq" id="WP_004036716.1">
    <property type="nucleotide sequence ID" value="NZ_CP117965.1"/>
</dbReference>
<dbReference type="SMR" id="A5UKI3"/>
<dbReference type="STRING" id="420247.Msm_0506"/>
<dbReference type="EnsemblBacteria" id="ABQ86711">
    <property type="protein sequence ID" value="ABQ86711"/>
    <property type="gene ID" value="Msm_0506"/>
</dbReference>
<dbReference type="KEGG" id="msi:Msm_0506"/>
<dbReference type="PATRIC" id="fig|420247.28.peg.505"/>
<dbReference type="eggNOG" id="arCOG04346">
    <property type="taxonomic scope" value="Archaea"/>
</dbReference>
<dbReference type="HOGENOM" id="CLU_065084_0_0_2"/>
<dbReference type="UniPathway" id="UPA00074">
    <property type="reaction ID" value="UER00134"/>
</dbReference>
<dbReference type="Proteomes" id="UP000001992">
    <property type="component" value="Chromosome"/>
</dbReference>
<dbReference type="GO" id="GO:0005524">
    <property type="term" value="F:ATP binding"/>
    <property type="evidence" value="ECO:0007669"/>
    <property type="project" value="UniProtKB-KW"/>
</dbReference>
<dbReference type="GO" id="GO:0016879">
    <property type="term" value="F:ligase activity, forming carbon-nitrogen bonds"/>
    <property type="evidence" value="ECO:0007669"/>
    <property type="project" value="UniProtKB-UniRule"/>
</dbReference>
<dbReference type="GO" id="GO:0000287">
    <property type="term" value="F:magnesium ion binding"/>
    <property type="evidence" value="ECO:0007669"/>
    <property type="project" value="InterPro"/>
</dbReference>
<dbReference type="GO" id="GO:0006189">
    <property type="term" value="P:'de novo' IMP biosynthetic process"/>
    <property type="evidence" value="ECO:0007669"/>
    <property type="project" value="UniProtKB-UniRule"/>
</dbReference>
<dbReference type="Gene3D" id="3.40.50.20">
    <property type="match status" value="1"/>
</dbReference>
<dbReference type="Gene3D" id="3.30.1490.20">
    <property type="entry name" value="ATP-grasp fold, A domain"/>
    <property type="match status" value="1"/>
</dbReference>
<dbReference type="Gene3D" id="3.30.470.20">
    <property type="entry name" value="ATP-grasp fold, B domain"/>
    <property type="match status" value="1"/>
</dbReference>
<dbReference type="HAMAP" id="MF_01163">
    <property type="entry name" value="IMP_biosynth_PurP"/>
    <property type="match status" value="1"/>
</dbReference>
<dbReference type="InterPro" id="IPR011761">
    <property type="entry name" value="ATP-grasp"/>
</dbReference>
<dbReference type="InterPro" id="IPR013815">
    <property type="entry name" value="ATP_grasp_subdomain_1"/>
</dbReference>
<dbReference type="InterPro" id="IPR023656">
    <property type="entry name" value="IMP_biosynth_PurP"/>
</dbReference>
<dbReference type="InterPro" id="IPR009720">
    <property type="entry name" value="IMP_biosynth_PurP_C"/>
</dbReference>
<dbReference type="InterPro" id="IPR010672">
    <property type="entry name" value="IMP_biosynth_PurP_N"/>
</dbReference>
<dbReference type="InterPro" id="IPR016185">
    <property type="entry name" value="PreATP-grasp_dom_sf"/>
</dbReference>
<dbReference type="NCBIfam" id="NF009780">
    <property type="entry name" value="PRK13278.1-5"/>
    <property type="match status" value="1"/>
</dbReference>
<dbReference type="PANTHER" id="PTHR38147:SF2">
    <property type="entry name" value="5-FORMAMINOIMIDAZOLE-4-CARBOXAMIDE-1-(BETA)-D-RIBOFURANOSYL 5'-MONOPHOSPHATE SYNTHETASE"/>
    <property type="match status" value="1"/>
</dbReference>
<dbReference type="PANTHER" id="PTHR38147">
    <property type="entry name" value="5-FORMAMINOIMIDAZOLE-4-CARBOXAMIDE-1-(BETA)-D-RIBOFURANOSYL 5'-MONOPHOSPHATE SYNTHETASE-RELATED"/>
    <property type="match status" value="1"/>
</dbReference>
<dbReference type="Pfam" id="PF06849">
    <property type="entry name" value="DUF1246"/>
    <property type="match status" value="1"/>
</dbReference>
<dbReference type="Pfam" id="PF06973">
    <property type="entry name" value="DUF1297"/>
    <property type="match status" value="1"/>
</dbReference>
<dbReference type="PIRSF" id="PIRSF004602">
    <property type="entry name" value="ATPgrasp_PurP"/>
    <property type="match status" value="1"/>
</dbReference>
<dbReference type="SUPFAM" id="SSF56059">
    <property type="entry name" value="Glutathione synthetase ATP-binding domain-like"/>
    <property type="match status" value="1"/>
</dbReference>
<dbReference type="SUPFAM" id="SSF52440">
    <property type="entry name" value="PreATP-grasp domain"/>
    <property type="match status" value="1"/>
</dbReference>
<dbReference type="PROSITE" id="PS50975">
    <property type="entry name" value="ATP_GRASP"/>
    <property type="match status" value="1"/>
</dbReference>
<organism>
    <name type="scientific">Methanobrevibacter smithii (strain ATCC 35061 / DSM 861 / OCM 144 / PS)</name>
    <dbReference type="NCBI Taxonomy" id="420247"/>
    <lineage>
        <taxon>Archaea</taxon>
        <taxon>Methanobacteriati</taxon>
        <taxon>Methanobacteriota</taxon>
        <taxon>Methanomada group</taxon>
        <taxon>Methanobacteria</taxon>
        <taxon>Methanobacteriales</taxon>
        <taxon>Methanobacteriaceae</taxon>
        <taxon>Methanobrevibacter</taxon>
    </lineage>
</organism>
<evidence type="ECO:0000250" key="1"/>
<evidence type="ECO:0000255" key="2">
    <source>
        <dbReference type="HAMAP-Rule" id="MF_01163"/>
    </source>
</evidence>
<gene>
    <name evidence="2" type="primary">purP</name>
    <name type="ordered locus">Msm_0506</name>
</gene>
<accession>A5UKI3</accession>
<sequence>MGEVKLEDIFEILDNYDKDNITIATLGSHTSLHILQGAKEEGFRTAIVCEKGREVPYQRFDVADEYIIVDKFKDIVNEDVQQKLRDMNAIVIPHGSFVAYAGLDNVEDKFNVPMFGNRDILRWEAERDKERALLVEGEVRIPYKYDNPSEIDRPVMVKFPGARGGRGYFVASSPEEFNKKIDAMKARGWLEDSDVANAHIEEYVSGCNYCIHYFYSALEDEVELLGMDTRYESSIDGFVRMPAKDQLDIDLSPSYVVTGNHPAVIRESLLPQVFEMADKLVESAKKLVAPGLNGPFCMQTLVNDNLEVICFEISARTDGGTNTFMGGSPYSYLTYGKPMSMGRRIALEIKNAIKKEELEKIIT</sequence>
<comment type="function">
    <text evidence="2">Catalyzes the ATP- and formate-dependent formylation of 5-aminoimidazole-4-carboxamide-1-beta-d-ribofuranosyl 5'-monophosphate (AICAR) to 5-formaminoimidazole-4-carboxamide-1-beta-d-ribofuranosyl 5'-monophosphate (FAICAR) in the absence of folates.</text>
</comment>
<comment type="catalytic activity">
    <reaction evidence="2">
        <text>5-amino-1-(5-phospho-beta-D-ribosyl)imidazole-4-carboxamide + formate + ATP = 5-formamido-1-(5-phospho-D-ribosyl)imidazole-4-carboxamide + ADP + phosphate</text>
        <dbReference type="Rhea" id="RHEA:24836"/>
        <dbReference type="ChEBI" id="CHEBI:15740"/>
        <dbReference type="ChEBI" id="CHEBI:30616"/>
        <dbReference type="ChEBI" id="CHEBI:43474"/>
        <dbReference type="ChEBI" id="CHEBI:58467"/>
        <dbReference type="ChEBI" id="CHEBI:58475"/>
        <dbReference type="ChEBI" id="CHEBI:456216"/>
        <dbReference type="EC" id="6.3.4.23"/>
    </reaction>
</comment>
<comment type="cofactor">
    <cofactor evidence="1">
        <name>Mg(2+)</name>
        <dbReference type="ChEBI" id="CHEBI:18420"/>
    </cofactor>
    <cofactor evidence="1">
        <name>Mn(2+)</name>
        <dbReference type="ChEBI" id="CHEBI:29035"/>
    </cofactor>
    <text evidence="1">Binds 1 Mg(2+) or Mn(2+) ion per subunit.</text>
</comment>
<comment type="pathway">
    <text evidence="2">Purine metabolism; IMP biosynthesis via de novo pathway; 5-formamido-1-(5-phospho-D-ribosyl)imidazole-4-carboxamide from 5-amino-1-(5-phospho-D-ribosyl)imidazole-4-carboxamide (formate route): step 1/1.</text>
</comment>
<comment type="similarity">
    <text evidence="2">Belongs to the phosphohexose mutase family.</text>
</comment>
<feature type="chain" id="PRO_0000348618" description="5-formaminoimidazole-4-carboxamide-1-(beta)-D-ribofuranosyl 5'-monophosphate synthetase">
    <location>
        <begin position="1"/>
        <end position="363"/>
    </location>
</feature>
<feature type="domain" description="ATP-grasp" evidence="2">
    <location>
        <begin position="118"/>
        <end position="354"/>
    </location>
</feature>
<feature type="binding site" evidence="2">
    <location>
        <position position="29"/>
    </location>
    <ligand>
        <name>5-amino-1-(5-phospho-beta-D-ribosyl)imidazole-4-carboxamide</name>
        <dbReference type="ChEBI" id="CHEBI:58475"/>
    </ligand>
</feature>
<feature type="binding site" evidence="2">
    <location>
        <position position="96"/>
    </location>
    <ligand>
        <name>5-amino-1-(5-phospho-beta-D-ribosyl)imidazole-4-carboxamide</name>
        <dbReference type="ChEBI" id="CHEBI:58475"/>
    </ligand>
</feature>
<feature type="binding site" evidence="2">
    <location>
        <begin position="148"/>
        <end position="210"/>
    </location>
    <ligand>
        <name>ATP</name>
        <dbReference type="ChEBI" id="CHEBI:30616"/>
    </ligand>
</feature>
<feature type="binding site" evidence="2">
    <location>
        <position position="232"/>
    </location>
    <ligand>
        <name>ATP</name>
        <dbReference type="ChEBI" id="CHEBI:30616"/>
    </ligand>
</feature>
<feature type="binding site" evidence="2">
    <location>
        <position position="260"/>
    </location>
    <ligand>
        <name>5-amino-1-(5-phospho-beta-D-ribosyl)imidazole-4-carboxamide</name>
        <dbReference type="ChEBI" id="CHEBI:58475"/>
    </ligand>
</feature>
<feature type="binding site" evidence="2">
    <location>
        <position position="299"/>
    </location>
    <ligand>
        <name>Mg(2+)</name>
        <dbReference type="ChEBI" id="CHEBI:18420"/>
    </ligand>
</feature>
<feature type="binding site" evidence="2">
    <location>
        <position position="312"/>
    </location>
    <ligand>
        <name>Mg(2+)</name>
        <dbReference type="ChEBI" id="CHEBI:18420"/>
    </ligand>
</feature>
<protein>
    <recommendedName>
        <fullName evidence="2">5-formaminoimidazole-4-carboxamide-1-(beta)-D-ribofuranosyl 5'-monophosphate synthetase</fullName>
        <ecNumber evidence="2">6.3.4.23</ecNumber>
    </recommendedName>
    <alternativeName>
        <fullName evidence="2">5-aminoimidazole-4-carboxamide-1-beta-D-ribofuranosyl 5'-monophosphate--formate ligase</fullName>
    </alternativeName>
</protein>
<reference key="1">
    <citation type="journal article" date="2007" name="Proc. Natl. Acad. Sci. U.S.A.">
        <title>Genomic and metabolic adaptations of Methanobrevibacter smithii to the human gut.</title>
        <authorList>
            <person name="Samuel B.S."/>
            <person name="Hansen E.E."/>
            <person name="Manchester J.K."/>
            <person name="Coutinho P.M."/>
            <person name="Henrissat B."/>
            <person name="Fulton R."/>
            <person name="Latreille P."/>
            <person name="Kim K."/>
            <person name="Wilson R.K."/>
            <person name="Gordon J.I."/>
        </authorList>
    </citation>
    <scope>NUCLEOTIDE SEQUENCE [LARGE SCALE GENOMIC DNA]</scope>
    <source>
        <strain>ATCC 35061 / DSM 861 / OCM 144 / PS</strain>
    </source>
</reference>